<evidence type="ECO:0000255" key="1">
    <source>
        <dbReference type="HAMAP-Rule" id="MF_00322"/>
    </source>
</evidence>
<proteinExistence type="inferred from homology"/>
<name>TOP6B_SACI3</name>
<dbReference type="EC" id="5.6.2.2" evidence="1"/>
<dbReference type="EMBL" id="CP001401">
    <property type="protein sequence ID" value="ACP55188.1"/>
    <property type="molecule type" value="Genomic_DNA"/>
</dbReference>
<dbReference type="RefSeq" id="WP_012711263.1">
    <property type="nucleotide sequence ID" value="NC_012632.1"/>
</dbReference>
<dbReference type="SMR" id="C3N5B3"/>
<dbReference type="KEGG" id="sim:M1627_1305"/>
<dbReference type="HOGENOM" id="CLU_006403_0_0_2"/>
<dbReference type="Proteomes" id="UP000002307">
    <property type="component" value="Chromosome"/>
</dbReference>
<dbReference type="GO" id="GO:0005524">
    <property type="term" value="F:ATP binding"/>
    <property type="evidence" value="ECO:0007669"/>
    <property type="project" value="UniProtKB-UniRule"/>
</dbReference>
<dbReference type="GO" id="GO:0003677">
    <property type="term" value="F:DNA binding"/>
    <property type="evidence" value="ECO:0007669"/>
    <property type="project" value="UniProtKB-UniRule"/>
</dbReference>
<dbReference type="GO" id="GO:0003918">
    <property type="term" value="F:DNA topoisomerase type II (double strand cut, ATP-hydrolyzing) activity"/>
    <property type="evidence" value="ECO:0007669"/>
    <property type="project" value="UniProtKB-UniRule"/>
</dbReference>
<dbReference type="GO" id="GO:0006265">
    <property type="term" value="P:DNA topological change"/>
    <property type="evidence" value="ECO:0007669"/>
    <property type="project" value="UniProtKB-UniRule"/>
</dbReference>
<dbReference type="CDD" id="cd16933">
    <property type="entry name" value="HATPase_TopVIB-like"/>
    <property type="match status" value="1"/>
</dbReference>
<dbReference type="CDD" id="cd00823">
    <property type="entry name" value="TopoIIB_Trans"/>
    <property type="match status" value="1"/>
</dbReference>
<dbReference type="FunFam" id="1.10.8.50:FF:000014">
    <property type="entry name" value="Type 2 DNA topoisomerase 6 subunit B"/>
    <property type="match status" value="1"/>
</dbReference>
<dbReference type="FunFam" id="3.30.230.10:FF:000091">
    <property type="entry name" value="Type 2 DNA topoisomerase 6 subunit B"/>
    <property type="match status" value="1"/>
</dbReference>
<dbReference type="FunFam" id="3.30.565.10:FF:000062">
    <property type="entry name" value="Type 2 DNA topoisomerase 6 subunit B"/>
    <property type="match status" value="1"/>
</dbReference>
<dbReference type="Gene3D" id="1.10.8.50">
    <property type="match status" value="1"/>
</dbReference>
<dbReference type="Gene3D" id="3.30.230.10">
    <property type="match status" value="1"/>
</dbReference>
<dbReference type="Gene3D" id="3.30.565.10">
    <property type="entry name" value="Histidine kinase-like ATPase, C-terminal domain"/>
    <property type="match status" value="1"/>
</dbReference>
<dbReference type="HAMAP" id="MF_00322">
    <property type="entry name" value="Top6B"/>
    <property type="match status" value="1"/>
</dbReference>
<dbReference type="InterPro" id="IPR036890">
    <property type="entry name" value="HATPase_C_sf"/>
</dbReference>
<dbReference type="InterPro" id="IPR020568">
    <property type="entry name" value="Ribosomal_Su5_D2-typ_SF"/>
</dbReference>
<dbReference type="InterPro" id="IPR010979">
    <property type="entry name" value="Ribosomal_uS13-like_H2TH"/>
</dbReference>
<dbReference type="InterPro" id="IPR014721">
    <property type="entry name" value="Ribsml_uS5_D2-typ_fold_subgr"/>
</dbReference>
<dbReference type="InterPro" id="IPR005734">
    <property type="entry name" value="TopoVI_B"/>
</dbReference>
<dbReference type="InterPro" id="IPR015320">
    <property type="entry name" value="TopoVI_B_transducer"/>
</dbReference>
<dbReference type="NCBIfam" id="NF003218">
    <property type="entry name" value="PRK04184.1"/>
    <property type="match status" value="1"/>
</dbReference>
<dbReference type="NCBIfam" id="TIGR01052">
    <property type="entry name" value="top6b"/>
    <property type="match status" value="1"/>
</dbReference>
<dbReference type="PANTHER" id="PTHR48444">
    <property type="entry name" value="DNA TOPOISOMERASE 6 SUBUNIT B"/>
    <property type="match status" value="1"/>
</dbReference>
<dbReference type="PANTHER" id="PTHR48444:SF1">
    <property type="entry name" value="DNA TOPOISOMERASE 6 SUBUNIT B"/>
    <property type="match status" value="1"/>
</dbReference>
<dbReference type="Pfam" id="PF02518">
    <property type="entry name" value="HATPase_c"/>
    <property type="match status" value="1"/>
</dbReference>
<dbReference type="Pfam" id="PF05833">
    <property type="entry name" value="NFACT_N"/>
    <property type="match status" value="1"/>
</dbReference>
<dbReference type="Pfam" id="PF09239">
    <property type="entry name" value="Topo-VIb_trans"/>
    <property type="match status" value="1"/>
</dbReference>
<dbReference type="PIRSF" id="PIRSF006553">
    <property type="entry name" value="TopoVI_B"/>
    <property type="match status" value="1"/>
</dbReference>
<dbReference type="SMART" id="SM00387">
    <property type="entry name" value="HATPase_c"/>
    <property type="match status" value="1"/>
</dbReference>
<dbReference type="SUPFAM" id="SSF55874">
    <property type="entry name" value="ATPase domain of HSP90 chaperone/DNA topoisomerase II/histidine kinase"/>
    <property type="match status" value="1"/>
</dbReference>
<dbReference type="SUPFAM" id="SSF54211">
    <property type="entry name" value="Ribosomal protein S5 domain 2-like"/>
    <property type="match status" value="1"/>
</dbReference>
<dbReference type="SUPFAM" id="SSF46946">
    <property type="entry name" value="S13-like H2TH domain"/>
    <property type="match status" value="1"/>
</dbReference>
<sequence length="530" mass="60563">MSAKEKFTSLSPAEFFKRNPELAGFPNPARALYQTVRELIENSLDATDVHGILPNIKITIDLIDEARQIYKVNVVDNGIGIPPQEVPNAFGRVLYSSKYVNRQTRGMYGLGVKAAVLYSQMHQDKPIEIETSPANSKRIYTFKLKIDINKNEPIIVERGSVENTRGFHGTSVAISIPGDWPKAKSRIYEYIKRTYIITPYAEFIFKDPEGNVTYYPRLTNKIPKPPQEVKPHPYGVDREEIKILINNLKRDYTIKEFLVNEFQSIGDTTADKILELAGLKPNKKVKNLTEEEITRLVETFKKYEDFRSPSADSLSVIGEDLIELGLKKIFNPDFAASITRKPKAYQGHPFIVEAGVAFGGSIPVGEEPIVLRYANKIPLIYDEKSDVIWKVVEELDWKRYGIESDQYQMVVMVHLCSTKIPYKSAGKESIAEVEDIEKEIKNALMEVARKLKQYLSEKRKEQEAKKKLLAYLKYIPEVSRSLATFLASGNKELVSKYQNEISEGLFKLISKKLDLINIEEYRKVYRVDSE</sequence>
<reference key="1">
    <citation type="journal article" date="2009" name="Proc. Natl. Acad. Sci. U.S.A.">
        <title>Biogeography of the Sulfolobus islandicus pan-genome.</title>
        <authorList>
            <person name="Reno M.L."/>
            <person name="Held N.L."/>
            <person name="Fields C.J."/>
            <person name="Burke P.V."/>
            <person name="Whitaker R.J."/>
        </authorList>
    </citation>
    <scope>NUCLEOTIDE SEQUENCE [LARGE SCALE GENOMIC DNA]</scope>
    <source>
        <strain>M.16.27</strain>
    </source>
</reference>
<accession>C3N5B3</accession>
<comment type="function">
    <text evidence="1">Relaxes both positive and negative superturns and exhibits a strong decatenase activity.</text>
</comment>
<comment type="catalytic activity">
    <reaction evidence="1">
        <text>ATP-dependent breakage, passage and rejoining of double-stranded DNA.</text>
        <dbReference type="EC" id="5.6.2.2"/>
    </reaction>
</comment>
<comment type="subunit">
    <text evidence="1">Homodimer. Heterotetramer of two Top6A and two Top6B chains.</text>
</comment>
<comment type="similarity">
    <text evidence="1">Belongs to the TOP6B family.</text>
</comment>
<protein>
    <recommendedName>
        <fullName evidence="1">Type 2 DNA topoisomerase 6 subunit B</fullName>
        <ecNumber evidence="1">5.6.2.2</ecNumber>
    </recommendedName>
    <alternativeName>
        <fullName evidence="1">Type II DNA topoisomerase VI subunit B</fullName>
        <shortName evidence="1">TopoVI-B</shortName>
    </alternativeName>
</protein>
<keyword id="KW-0067">ATP-binding</keyword>
<keyword id="KW-0238">DNA-binding</keyword>
<keyword id="KW-0413">Isomerase</keyword>
<keyword id="KW-0547">Nucleotide-binding</keyword>
<keyword id="KW-0799">Topoisomerase</keyword>
<organism>
    <name type="scientific">Saccharolobus islandicus (strain M.16.27)</name>
    <name type="common">Sulfolobus islandicus</name>
    <dbReference type="NCBI Taxonomy" id="427318"/>
    <lineage>
        <taxon>Archaea</taxon>
        <taxon>Thermoproteota</taxon>
        <taxon>Thermoprotei</taxon>
        <taxon>Sulfolobales</taxon>
        <taxon>Sulfolobaceae</taxon>
        <taxon>Saccharolobus</taxon>
    </lineage>
</organism>
<feature type="chain" id="PRO_1000205142" description="Type 2 DNA topoisomerase 6 subunit B">
    <location>
        <begin position="1"/>
        <end position="530"/>
    </location>
</feature>
<feature type="binding site" evidence="1">
    <location>
        <position position="42"/>
    </location>
    <ligand>
        <name>ATP</name>
        <dbReference type="ChEBI" id="CHEBI:30616"/>
    </ligand>
</feature>
<feature type="binding site" evidence="1">
    <location>
        <position position="76"/>
    </location>
    <ligand>
        <name>ATP</name>
        <dbReference type="ChEBI" id="CHEBI:30616"/>
    </ligand>
</feature>
<feature type="binding site" evidence="1">
    <location>
        <begin position="97"/>
        <end position="98"/>
    </location>
    <ligand>
        <name>ATP</name>
        <dbReference type="ChEBI" id="CHEBI:30616"/>
    </ligand>
</feature>
<feature type="binding site" evidence="1">
    <location>
        <begin position="106"/>
        <end position="113"/>
    </location>
    <ligand>
        <name>ATP</name>
        <dbReference type="ChEBI" id="CHEBI:30616"/>
    </ligand>
</feature>
<feature type="binding site" evidence="1">
    <location>
        <position position="427"/>
    </location>
    <ligand>
        <name>ATP</name>
        <dbReference type="ChEBI" id="CHEBI:30616"/>
    </ligand>
</feature>
<gene>
    <name evidence="1" type="primary">top6B</name>
    <name type="ordered locus">M1627_1305</name>
</gene>